<reference key="1">
    <citation type="journal article" date="2002" name="EMBO J.">
        <title>Importins fulfill a dual function as nuclear import receptors and cytoplasmic chaperones for exposed basic domains.</title>
        <authorList>
            <person name="Jaekel S."/>
            <person name="Mingot J.-M."/>
            <person name="Schwarzmaier P."/>
            <person name="Hartmann E."/>
            <person name="Goerlich D."/>
        </authorList>
    </citation>
    <scope>NUCLEOTIDE SEQUENCE [MRNA] (ISOFORM 1)</scope>
    <scope>FUNCTION</scope>
    <scope>INTERACTION WITH RPS3A</scope>
    <scope>VARIANTS VAL-513 AND ALA-580</scope>
</reference>
<reference key="2">
    <citation type="submission" date="2003-02" db="EMBL/GenBank/DDBJ databases">
        <title>Full-length cDNA libraries and normalization.</title>
        <authorList>
            <person name="Li W.B."/>
            <person name="Gruber C."/>
            <person name="Jessee J."/>
            <person name="Polayes D."/>
        </authorList>
    </citation>
    <scope>NUCLEOTIDE SEQUENCE [LARGE SCALE MRNA] (ISOFORM 1)</scope>
    <source>
        <tissue>Neuroblastoma</tissue>
    </source>
</reference>
<reference key="3">
    <citation type="submission" date="2005-09" db="EMBL/GenBank/DDBJ databases">
        <authorList>
            <person name="Mural R.J."/>
            <person name="Istrail S."/>
            <person name="Sutton G.G."/>
            <person name="Florea L."/>
            <person name="Halpern A.L."/>
            <person name="Mobarry C.M."/>
            <person name="Lippert R."/>
            <person name="Walenz B."/>
            <person name="Shatkay H."/>
            <person name="Dew I."/>
            <person name="Miller J.R."/>
            <person name="Flanigan M.J."/>
            <person name="Edwards N.J."/>
            <person name="Bolanos R."/>
            <person name="Fasulo D."/>
            <person name="Halldorsson B.V."/>
            <person name="Hannenhalli S."/>
            <person name="Turner R."/>
            <person name="Yooseph S."/>
            <person name="Lu F."/>
            <person name="Nusskern D.R."/>
            <person name="Shue B.C."/>
            <person name="Zheng X.H."/>
            <person name="Zhong F."/>
            <person name="Delcher A.L."/>
            <person name="Huson D.H."/>
            <person name="Kravitz S.A."/>
            <person name="Mouchard L."/>
            <person name="Reinert K."/>
            <person name="Remington K.A."/>
            <person name="Clark A.G."/>
            <person name="Waterman M.S."/>
            <person name="Eichler E.E."/>
            <person name="Adams M.D."/>
            <person name="Hunkapiller M.W."/>
            <person name="Myers E.W."/>
            <person name="Venter J.C."/>
        </authorList>
    </citation>
    <scope>NUCLEOTIDE SEQUENCE [LARGE SCALE GENOMIC DNA]</scope>
</reference>
<reference key="4">
    <citation type="journal article" date="2003" name="Nature">
        <title>The DNA sequence and analysis of human chromosome 14.</title>
        <authorList>
            <person name="Heilig R."/>
            <person name="Eckenberg R."/>
            <person name="Petit J.-L."/>
            <person name="Fonknechten N."/>
            <person name="Da Silva C."/>
            <person name="Cattolico L."/>
            <person name="Levy M."/>
            <person name="Barbe V."/>
            <person name="De Berardinis V."/>
            <person name="Ureta-Vidal A."/>
            <person name="Pelletier E."/>
            <person name="Vico V."/>
            <person name="Anthouard V."/>
            <person name="Rowen L."/>
            <person name="Madan A."/>
            <person name="Qin S."/>
            <person name="Sun H."/>
            <person name="Du H."/>
            <person name="Pepin K."/>
            <person name="Artiguenave F."/>
            <person name="Robert C."/>
            <person name="Cruaud C."/>
            <person name="Bruels T."/>
            <person name="Jaillon O."/>
            <person name="Friedlander L."/>
            <person name="Samson G."/>
            <person name="Brottier P."/>
            <person name="Cure S."/>
            <person name="Segurens B."/>
            <person name="Aniere F."/>
            <person name="Samain S."/>
            <person name="Crespeau H."/>
            <person name="Abbasi N."/>
            <person name="Aiach N."/>
            <person name="Boscus D."/>
            <person name="Dickhoff R."/>
            <person name="Dors M."/>
            <person name="Dubois I."/>
            <person name="Friedman C."/>
            <person name="Gouyvenoux M."/>
            <person name="James R."/>
            <person name="Madan A."/>
            <person name="Mairey-Estrada B."/>
            <person name="Mangenot S."/>
            <person name="Martins N."/>
            <person name="Menard M."/>
            <person name="Oztas S."/>
            <person name="Ratcliffe A."/>
            <person name="Shaffer T."/>
            <person name="Trask B."/>
            <person name="Vacherie B."/>
            <person name="Bellemere C."/>
            <person name="Belser C."/>
            <person name="Besnard-Gonnet M."/>
            <person name="Bartol-Mavel D."/>
            <person name="Boutard M."/>
            <person name="Briez-Silla S."/>
            <person name="Combette S."/>
            <person name="Dufosse-Laurent V."/>
            <person name="Ferron C."/>
            <person name="Lechaplais C."/>
            <person name="Louesse C."/>
            <person name="Muselet D."/>
            <person name="Magdelenat G."/>
            <person name="Pateau E."/>
            <person name="Petit E."/>
            <person name="Sirvain-Trukniewicz P."/>
            <person name="Trybou A."/>
            <person name="Vega-Czarny N."/>
            <person name="Bataille E."/>
            <person name="Bluet E."/>
            <person name="Bordelais I."/>
            <person name="Dubois M."/>
            <person name="Dumont C."/>
            <person name="Guerin T."/>
            <person name="Haffray S."/>
            <person name="Hammadi R."/>
            <person name="Muanga J."/>
            <person name="Pellouin V."/>
            <person name="Robert D."/>
            <person name="Wunderle E."/>
            <person name="Gauguet G."/>
            <person name="Roy A."/>
            <person name="Sainte-Marthe L."/>
            <person name="Verdier J."/>
            <person name="Verdier-Discala C."/>
            <person name="Hillier L.W."/>
            <person name="Fulton L."/>
            <person name="McPherson J."/>
            <person name="Matsuda F."/>
            <person name="Wilson R."/>
            <person name="Scarpelli C."/>
            <person name="Gyapay G."/>
            <person name="Wincker P."/>
            <person name="Saurin W."/>
            <person name="Quetier F."/>
            <person name="Waterston R."/>
            <person name="Hood L."/>
            <person name="Weissenbach J."/>
        </authorList>
    </citation>
    <scope>NUCLEOTIDE SEQUENCE [LARGE SCALE GENOMIC DNA]</scope>
</reference>
<reference key="5">
    <citation type="journal article" date="2004" name="Genome Res.">
        <title>The status, quality, and expansion of the NIH full-length cDNA project: the Mammalian Gene Collection (MGC).</title>
        <authorList>
            <consortium name="The MGC Project Team"/>
        </authorList>
    </citation>
    <scope>NUCLEOTIDE SEQUENCE [LARGE SCALE MRNA] (ISOFORM 1)</scope>
    <source>
        <tissue>Brain</tissue>
        <tissue>Placenta</tissue>
        <tissue>Skin</tissue>
    </source>
</reference>
<reference key="6">
    <citation type="submission" date="2005-06" db="UniProtKB">
        <authorList>
            <person name="Bienvenut W.V."/>
        </authorList>
    </citation>
    <scope>PROTEIN SEQUENCE OF 1-11; 24-33; 55-62; 82-90; 402-411; 528-534; 751-761; 900-916; 941-951 AND 1042-1053</scope>
    <scope>ACETYLATION AT MET-1</scope>
    <scope>IDENTIFICATION BY MASS SPECTROMETRY</scope>
    <source>
        <tissue>B-cell lymphoma</tissue>
    </source>
</reference>
<reference key="7">
    <citation type="journal article" date="2004" name="Nat. Genet.">
        <title>Complete sequencing and characterization of 21,243 full-length human cDNAs.</title>
        <authorList>
            <person name="Ota T."/>
            <person name="Suzuki Y."/>
            <person name="Nishikawa T."/>
            <person name="Otsuki T."/>
            <person name="Sugiyama T."/>
            <person name="Irie R."/>
            <person name="Wakamatsu A."/>
            <person name="Hayashi K."/>
            <person name="Sato H."/>
            <person name="Nagai K."/>
            <person name="Kimura K."/>
            <person name="Makita H."/>
            <person name="Sekine M."/>
            <person name="Obayashi M."/>
            <person name="Nishi T."/>
            <person name="Shibahara T."/>
            <person name="Tanaka T."/>
            <person name="Ishii S."/>
            <person name="Yamamoto J."/>
            <person name="Saito K."/>
            <person name="Kawai Y."/>
            <person name="Isono Y."/>
            <person name="Nakamura Y."/>
            <person name="Nagahari K."/>
            <person name="Murakami K."/>
            <person name="Yasuda T."/>
            <person name="Iwayanagi T."/>
            <person name="Wagatsuma M."/>
            <person name="Shiratori A."/>
            <person name="Sudo H."/>
            <person name="Hosoiri T."/>
            <person name="Kaku Y."/>
            <person name="Kodaira H."/>
            <person name="Kondo H."/>
            <person name="Sugawara M."/>
            <person name="Takahashi M."/>
            <person name="Kanda K."/>
            <person name="Yokoi T."/>
            <person name="Furuya T."/>
            <person name="Kikkawa E."/>
            <person name="Omura Y."/>
            <person name="Abe K."/>
            <person name="Kamihara K."/>
            <person name="Katsuta N."/>
            <person name="Sato K."/>
            <person name="Tanikawa M."/>
            <person name="Yamazaki M."/>
            <person name="Ninomiya K."/>
            <person name="Ishibashi T."/>
            <person name="Yamashita H."/>
            <person name="Murakawa K."/>
            <person name="Fujimori K."/>
            <person name="Tanai H."/>
            <person name="Kimata M."/>
            <person name="Watanabe M."/>
            <person name="Hiraoka S."/>
            <person name="Chiba Y."/>
            <person name="Ishida S."/>
            <person name="Ono Y."/>
            <person name="Takiguchi S."/>
            <person name="Watanabe S."/>
            <person name="Yosida M."/>
            <person name="Hotuta T."/>
            <person name="Kusano J."/>
            <person name="Kanehori K."/>
            <person name="Takahashi-Fujii A."/>
            <person name="Hara H."/>
            <person name="Tanase T.-O."/>
            <person name="Nomura Y."/>
            <person name="Togiya S."/>
            <person name="Komai F."/>
            <person name="Hara R."/>
            <person name="Takeuchi K."/>
            <person name="Arita M."/>
            <person name="Imose N."/>
            <person name="Musashino K."/>
            <person name="Yuuki H."/>
            <person name="Oshima A."/>
            <person name="Sasaki N."/>
            <person name="Aotsuka S."/>
            <person name="Yoshikawa Y."/>
            <person name="Matsunawa H."/>
            <person name="Ichihara T."/>
            <person name="Shiohata N."/>
            <person name="Sano S."/>
            <person name="Moriya S."/>
            <person name="Momiyama H."/>
            <person name="Satoh N."/>
            <person name="Takami S."/>
            <person name="Terashima Y."/>
            <person name="Suzuki O."/>
            <person name="Nakagawa S."/>
            <person name="Senoh A."/>
            <person name="Mizoguchi H."/>
            <person name="Goto Y."/>
            <person name="Shimizu F."/>
            <person name="Wakebe H."/>
            <person name="Hishigaki H."/>
            <person name="Watanabe T."/>
            <person name="Sugiyama A."/>
            <person name="Takemoto M."/>
            <person name="Kawakami B."/>
            <person name="Yamazaki M."/>
            <person name="Watanabe K."/>
            <person name="Kumagai A."/>
            <person name="Itakura S."/>
            <person name="Fukuzumi Y."/>
            <person name="Fujimori Y."/>
            <person name="Komiyama M."/>
            <person name="Tashiro H."/>
            <person name="Tanigami A."/>
            <person name="Fujiwara T."/>
            <person name="Ono T."/>
            <person name="Yamada K."/>
            <person name="Fujii Y."/>
            <person name="Ozaki K."/>
            <person name="Hirao M."/>
            <person name="Ohmori Y."/>
            <person name="Kawabata A."/>
            <person name="Hikiji T."/>
            <person name="Kobatake N."/>
            <person name="Inagaki H."/>
            <person name="Ikema Y."/>
            <person name="Okamoto S."/>
            <person name="Okitani R."/>
            <person name="Kawakami T."/>
            <person name="Noguchi S."/>
            <person name="Itoh T."/>
            <person name="Shigeta K."/>
            <person name="Senba T."/>
            <person name="Matsumura K."/>
            <person name="Nakajima Y."/>
            <person name="Mizuno T."/>
            <person name="Morinaga M."/>
            <person name="Sasaki M."/>
            <person name="Togashi T."/>
            <person name="Oyama M."/>
            <person name="Hata H."/>
            <person name="Watanabe M."/>
            <person name="Komatsu T."/>
            <person name="Mizushima-Sugano J."/>
            <person name="Satoh T."/>
            <person name="Shirai Y."/>
            <person name="Takahashi Y."/>
            <person name="Nakagawa K."/>
            <person name="Okumura K."/>
            <person name="Nagase T."/>
            <person name="Nomura N."/>
            <person name="Kikuchi H."/>
            <person name="Masuho Y."/>
            <person name="Yamashita R."/>
            <person name="Nakai K."/>
            <person name="Yada T."/>
            <person name="Nakamura Y."/>
            <person name="Ohara O."/>
            <person name="Isogai T."/>
            <person name="Sugano S."/>
        </authorList>
    </citation>
    <scope>NUCLEOTIDE SEQUENCE [LARGE SCALE MRNA] OF 233-1081 (ISOFORM 1)</scope>
    <scope>NUCLEOTIDE SEQUENCE [LARGE SCALE MRNA] OF 538-1081 (ISOFORM 2)</scope>
    <scope>VARIANTS VAL-513 AND ALA-580</scope>
</reference>
<reference key="8">
    <citation type="journal article" date="2003" name="J. Virol.">
        <title>A nonconventional nuclear localization signal within the UL84 protein of human cytomegalovirus mediates nuclear import via the importin alpha/beta pathway.</title>
        <authorList>
            <person name="Lischka P."/>
            <person name="Sorg G."/>
            <person name="Kann M."/>
            <person name="Winkler M."/>
            <person name="Stamminger T."/>
        </authorList>
    </citation>
    <scope>FUNCTION</scope>
    <scope>INTERACTION WITH HCMV UL84</scope>
</reference>
<reference key="9">
    <citation type="journal article" date="2005" name="J. Biol. Chem.">
        <title>Importin 4 is responsible for ligand-independent nuclear translocation of vitamin D receptor.</title>
        <authorList>
            <person name="Miyauchi Y."/>
            <person name="Michigami T."/>
            <person name="Sakaguchi N."/>
            <person name="Sekimoto T."/>
            <person name="Yoneda Y."/>
            <person name="Pike J.W."/>
            <person name="Yamagata M."/>
            <person name="Ozono K."/>
        </authorList>
    </citation>
    <scope>FUNCTION</scope>
    <scope>SUBCELLULAR LOCATION</scope>
</reference>
<reference key="10">
    <citation type="journal article" date="2008" name="Mol. Cell. Biol.">
        <title>Involvement of importin-4 in the transport of transition protein 2 into the spermatid nucleus.</title>
        <authorList>
            <person name="Pradeepa M.M."/>
            <person name="Manjunatha S."/>
            <person name="Sathish V."/>
            <person name="Agrawal S."/>
            <person name="Rao M.R."/>
        </authorList>
    </citation>
    <scope>FUNCTION</scope>
    <scope>SUBCELLULAR LOCATION</scope>
</reference>
<reference key="11">
    <citation type="journal article" date="2009" name="Anal. Chem.">
        <title>Lys-N and trypsin cover complementary parts of the phosphoproteome in a refined SCX-based approach.</title>
        <authorList>
            <person name="Gauci S."/>
            <person name="Helbig A.O."/>
            <person name="Slijper M."/>
            <person name="Krijgsveld J."/>
            <person name="Heck A.J."/>
            <person name="Mohammed S."/>
        </authorList>
    </citation>
    <scope>ACETYLATION [LARGE SCALE ANALYSIS] AT MET-1</scope>
    <scope>IDENTIFICATION BY MASS SPECTROMETRY [LARGE SCALE ANALYSIS]</scope>
</reference>
<reference key="12">
    <citation type="journal article" date="2011" name="BMC Syst. Biol.">
        <title>Initial characterization of the human central proteome.</title>
        <authorList>
            <person name="Burkard T.R."/>
            <person name="Planyavsky M."/>
            <person name="Kaupe I."/>
            <person name="Breitwieser F.P."/>
            <person name="Buerckstuemmer T."/>
            <person name="Bennett K.L."/>
            <person name="Superti-Furga G."/>
            <person name="Colinge J."/>
        </authorList>
    </citation>
    <scope>IDENTIFICATION BY MASS SPECTROMETRY [LARGE SCALE ANALYSIS]</scope>
</reference>
<reference key="13">
    <citation type="journal article" date="2011" name="J. Biol. Chem.">
        <title>Sequential establishment of marks on soluble histones H3 and H4.</title>
        <authorList>
            <person name="Alvarez F."/>
            <person name="Munoz F."/>
            <person name="Schilcher P."/>
            <person name="Imhof A."/>
            <person name="Almouzni G."/>
            <person name="Loyola A."/>
        </authorList>
    </citation>
    <scope>FUNCTION</scope>
</reference>
<reference key="14">
    <citation type="journal article" date="2012" name="EMBO J.">
        <title>Codanin-1, mutated in the anaemic disease CDAI, regulates Asf1 function in S-phase histone supply.</title>
        <authorList>
            <person name="Ask K."/>
            <person name="Jasencakova Z."/>
            <person name="Menard P."/>
            <person name="Feng Y."/>
            <person name="Almouzni G."/>
            <person name="Groth A."/>
        </authorList>
    </citation>
    <scope>IDENTIFICATION IN A COMPLEX WITH ASF1A; ASF1B; HISTONES H3 AND H4</scope>
</reference>
<reference key="15">
    <citation type="journal article" date="2012" name="Mol. Cell. Proteomics">
        <title>Comparative large-scale characterisation of plant vs. mammal proteins reveals similar and idiosyncratic N-alpha acetylation features.</title>
        <authorList>
            <person name="Bienvenut W.V."/>
            <person name="Sumpton D."/>
            <person name="Martinez A."/>
            <person name="Lilla S."/>
            <person name="Espagne C."/>
            <person name="Meinnel T."/>
            <person name="Giglione C."/>
        </authorList>
    </citation>
    <scope>ACETYLATION [LARGE SCALE ANALYSIS] AT MET-1</scope>
    <scope>IDENTIFICATION BY MASS SPECTROMETRY [LARGE SCALE ANALYSIS]</scope>
</reference>
<reference key="16">
    <citation type="journal article" date="2012" name="Proc. Natl. Acad. Sci. U.S.A.">
        <title>N-terminal acetylome analyses and functional insights of the N-terminal acetyltransferase NatB.</title>
        <authorList>
            <person name="Van Damme P."/>
            <person name="Lasa M."/>
            <person name="Polevoda B."/>
            <person name="Gazquez C."/>
            <person name="Elosegui-Artola A."/>
            <person name="Kim D.S."/>
            <person name="De Juan-Pardo E."/>
            <person name="Demeyer K."/>
            <person name="Hole K."/>
            <person name="Larrea E."/>
            <person name="Timmerman E."/>
            <person name="Prieto J."/>
            <person name="Arnesen T."/>
            <person name="Sherman F."/>
            <person name="Gevaert K."/>
            <person name="Aldabe R."/>
        </authorList>
    </citation>
    <scope>ACETYLATION [LARGE SCALE ANALYSIS] AT MET-1</scope>
    <scope>IDENTIFICATION BY MASS SPECTROMETRY [LARGE SCALE ANALYSIS]</scope>
</reference>
<reference evidence="14 15" key="17">
    <citation type="journal article" date="2018" name="J. Mol. Biol.">
        <title>Integrative structural investigation on the architecture of human Importin4_Histone H3/H4_Asf1a complex and its histone H3 tail binding.</title>
        <authorList>
            <person name="Yoon J."/>
            <person name="Kim S.J."/>
            <person name="An S."/>
            <person name="Cho S."/>
            <person name="Leitner A."/>
            <person name="Jung T."/>
            <person name="Aebersold R."/>
            <person name="Hebert H."/>
            <person name="Cho U.S."/>
            <person name="Song J.J."/>
        </authorList>
    </citation>
    <scope>X-RAY CRYSTALLOGRAPHY (3.00 ANGSTROMS) OF 668-1081 IN COMPLEX WITH HISTONE H3.2</scope>
    <scope>FUNCTION</scope>
</reference>
<name>IPO4_HUMAN</name>
<feature type="chain" id="PRO_0000120748" description="Importin-4">
    <location>
        <begin position="1"/>
        <end position="1081"/>
    </location>
</feature>
<feature type="domain" description="Importin N-terminal" evidence="1">
    <location>
        <begin position="24"/>
        <end position="90"/>
    </location>
</feature>
<feature type="repeat" description="HEAT 1">
    <location>
        <begin position="348"/>
        <end position="385"/>
    </location>
</feature>
<feature type="repeat" description="HEAT 2">
    <location>
        <begin position="390"/>
        <end position="427"/>
    </location>
</feature>
<feature type="repeat" description="HEAT 3">
    <location>
        <begin position="431"/>
        <end position="471"/>
    </location>
</feature>
<feature type="repeat" description="HEAT 4">
    <location>
        <begin position="475"/>
        <end position="513"/>
    </location>
</feature>
<feature type="repeat" description="HEAT 5">
    <location>
        <begin position="895"/>
        <end position="932"/>
    </location>
</feature>
<feature type="repeat" description="HEAT 6">
    <location>
        <begin position="936"/>
        <end position="974"/>
    </location>
</feature>
<feature type="modified residue" description="N-acetylmethionine" evidence="10 16 17 18">
    <location>
        <position position="1"/>
    </location>
</feature>
<feature type="splice variant" id="VSP_009339" description="In isoform 2." evidence="12">
    <original>P</original>
    <variation>PGE</variation>
    <location>
        <position position="1038"/>
    </location>
</feature>
<feature type="sequence variant" id="VAR_030758" description="In dbSNP:rs7146310." evidence="2 4">
    <original>A</original>
    <variation>V</variation>
    <location>
        <position position="513"/>
    </location>
</feature>
<feature type="sequence variant" id="VAR_030759" description="In dbSNP:rs11550452." evidence="2 4">
    <original>P</original>
    <variation>A</variation>
    <location>
        <position position="580"/>
    </location>
</feature>
<feature type="sequence conflict" description="In Ref. 7; BAB15616." evidence="13" ref="7">
    <original>K</original>
    <variation>R</variation>
    <location>
        <position position="865"/>
    </location>
</feature>
<feature type="sequence conflict" description="In Ref. 7; BAB55421." evidence="13" ref="7">
    <original>G</original>
    <variation>E</variation>
    <location>
        <position position="943"/>
    </location>
</feature>
<feature type="helix" evidence="21">
    <location>
        <begin position="21"/>
        <end position="25"/>
    </location>
</feature>
<feature type="turn" evidence="21">
    <location>
        <begin position="26"/>
        <end position="29"/>
    </location>
</feature>
<feature type="helix" evidence="21">
    <location>
        <begin position="41"/>
        <end position="44"/>
    </location>
</feature>
<feature type="helix" evidence="21">
    <location>
        <begin position="53"/>
        <end position="68"/>
    </location>
</feature>
<feature type="helix" evidence="21">
    <location>
        <begin position="70"/>
        <end position="72"/>
    </location>
</feature>
<feature type="turn" evidence="21">
    <location>
        <begin position="73"/>
        <end position="76"/>
    </location>
</feature>
<feature type="helix" evidence="21">
    <location>
        <begin position="77"/>
        <end position="88"/>
    </location>
</feature>
<feature type="helix" evidence="21">
    <location>
        <begin position="95"/>
        <end position="110"/>
    </location>
</feature>
<feature type="strand" evidence="21">
    <location>
        <begin position="113"/>
        <end position="115"/>
    </location>
</feature>
<feature type="helix" evidence="21">
    <location>
        <begin position="119"/>
        <end position="126"/>
    </location>
</feature>
<feature type="helix" evidence="21">
    <location>
        <begin position="132"/>
        <end position="148"/>
    </location>
</feature>
<feature type="helix" evidence="21">
    <location>
        <begin position="150"/>
        <end position="153"/>
    </location>
</feature>
<feature type="helix" evidence="21">
    <location>
        <begin position="157"/>
        <end position="167"/>
    </location>
</feature>
<feature type="helix" evidence="21">
    <location>
        <begin position="174"/>
        <end position="187"/>
    </location>
</feature>
<feature type="helix" evidence="21">
    <location>
        <begin position="188"/>
        <end position="190"/>
    </location>
</feature>
<feature type="helix" evidence="21">
    <location>
        <begin position="193"/>
        <end position="195"/>
    </location>
</feature>
<feature type="helix" evidence="21">
    <location>
        <begin position="196"/>
        <end position="216"/>
    </location>
</feature>
<feature type="helix" evidence="21">
    <location>
        <begin position="218"/>
        <end position="232"/>
    </location>
</feature>
<feature type="strand" evidence="21">
    <location>
        <begin position="233"/>
        <end position="239"/>
    </location>
</feature>
<feature type="helix" evidence="21">
    <location>
        <begin position="240"/>
        <end position="242"/>
    </location>
</feature>
<feature type="helix" evidence="21">
    <location>
        <begin position="243"/>
        <end position="254"/>
    </location>
</feature>
<feature type="helix" evidence="21">
    <location>
        <begin position="261"/>
        <end position="277"/>
    </location>
</feature>
<feature type="helix" evidence="21">
    <location>
        <begin position="280"/>
        <end position="284"/>
    </location>
</feature>
<feature type="turn" evidence="21">
    <location>
        <begin position="285"/>
        <end position="287"/>
    </location>
</feature>
<feature type="helix" evidence="21">
    <location>
        <begin position="288"/>
        <end position="299"/>
    </location>
</feature>
<feature type="helix" evidence="21">
    <location>
        <begin position="310"/>
        <end position="312"/>
    </location>
</feature>
<feature type="helix" evidence="21">
    <location>
        <begin position="329"/>
        <end position="342"/>
    </location>
</feature>
<feature type="helix" evidence="21">
    <location>
        <begin position="346"/>
        <end position="361"/>
    </location>
</feature>
<feature type="helix" evidence="21">
    <location>
        <begin position="366"/>
        <end position="382"/>
    </location>
</feature>
<feature type="helix" evidence="21">
    <location>
        <begin position="384"/>
        <end position="390"/>
    </location>
</feature>
<feature type="helix" evidence="21">
    <location>
        <begin position="394"/>
        <end position="397"/>
    </location>
</feature>
<feature type="turn" evidence="21">
    <location>
        <begin position="398"/>
        <end position="401"/>
    </location>
</feature>
<feature type="helix" evidence="21">
    <location>
        <begin position="402"/>
        <end position="404"/>
    </location>
</feature>
<feature type="helix" evidence="21">
    <location>
        <begin position="408"/>
        <end position="424"/>
    </location>
</feature>
<feature type="helix" evidence="21">
    <location>
        <begin position="426"/>
        <end position="429"/>
    </location>
</feature>
<feature type="helix" evidence="21">
    <location>
        <begin position="430"/>
        <end position="432"/>
    </location>
</feature>
<feature type="helix" evidence="21">
    <location>
        <begin position="433"/>
        <end position="446"/>
    </location>
</feature>
<feature type="helix" evidence="21">
    <location>
        <begin position="452"/>
        <end position="466"/>
    </location>
</feature>
<feature type="turn" evidence="21">
    <location>
        <begin position="467"/>
        <end position="469"/>
    </location>
</feature>
<feature type="helix" evidence="21">
    <location>
        <begin position="470"/>
        <end position="473"/>
    </location>
</feature>
<feature type="turn" evidence="21">
    <location>
        <begin position="474"/>
        <end position="476"/>
    </location>
</feature>
<feature type="helix" evidence="21">
    <location>
        <begin position="477"/>
        <end position="489"/>
    </location>
</feature>
<feature type="helix" evidence="21">
    <location>
        <begin position="495"/>
        <end position="510"/>
    </location>
</feature>
<feature type="strand" evidence="21">
    <location>
        <begin position="511"/>
        <end position="513"/>
    </location>
</feature>
<feature type="helix" evidence="21">
    <location>
        <begin position="519"/>
        <end position="531"/>
    </location>
</feature>
<feature type="helix" evidence="21">
    <location>
        <begin position="535"/>
        <end position="537"/>
    </location>
</feature>
<feature type="helix" evidence="21">
    <location>
        <begin position="538"/>
        <end position="554"/>
    </location>
</feature>
<feature type="helix" evidence="21">
    <location>
        <begin position="557"/>
        <end position="559"/>
    </location>
</feature>
<feature type="helix" evidence="21">
    <location>
        <begin position="560"/>
        <end position="574"/>
    </location>
</feature>
<feature type="helix" evidence="21">
    <location>
        <begin position="580"/>
        <end position="583"/>
    </location>
</feature>
<feature type="turn" evidence="21">
    <location>
        <begin position="584"/>
        <end position="586"/>
    </location>
</feature>
<feature type="helix" evidence="21">
    <location>
        <begin position="587"/>
        <end position="597"/>
    </location>
</feature>
<feature type="helix" evidence="21">
    <location>
        <begin position="599"/>
        <end position="601"/>
    </location>
</feature>
<feature type="helix" evidence="21">
    <location>
        <begin position="602"/>
        <end position="609"/>
    </location>
</feature>
<feature type="turn" evidence="21">
    <location>
        <begin position="610"/>
        <end position="612"/>
    </location>
</feature>
<feature type="helix" evidence="21">
    <location>
        <begin position="613"/>
        <end position="616"/>
    </location>
</feature>
<feature type="strand" evidence="21">
    <location>
        <begin position="621"/>
        <end position="626"/>
    </location>
</feature>
<feature type="helix" evidence="21">
    <location>
        <begin position="645"/>
        <end position="647"/>
    </location>
</feature>
<feature type="strand" evidence="21">
    <location>
        <begin position="648"/>
        <end position="650"/>
    </location>
</feature>
<feature type="strand" evidence="21">
    <location>
        <begin position="658"/>
        <end position="665"/>
    </location>
</feature>
<feature type="helix" evidence="21">
    <location>
        <begin position="670"/>
        <end position="686"/>
    </location>
</feature>
<feature type="helix" evidence="19">
    <location>
        <begin position="695"/>
        <end position="703"/>
    </location>
</feature>
<feature type="helix" evidence="19">
    <location>
        <begin position="704"/>
        <end position="706"/>
    </location>
</feature>
<feature type="helix" evidence="19">
    <location>
        <begin position="711"/>
        <end position="732"/>
    </location>
</feature>
<feature type="helix" evidence="19">
    <location>
        <begin position="738"/>
        <end position="759"/>
    </location>
</feature>
<feature type="helix" evidence="19">
    <location>
        <begin position="765"/>
        <end position="781"/>
    </location>
</feature>
<feature type="helix" evidence="19">
    <location>
        <begin position="784"/>
        <end position="787"/>
    </location>
</feature>
<feature type="helix" evidence="19">
    <location>
        <begin position="792"/>
        <end position="804"/>
    </location>
</feature>
<feature type="turn" evidence="21">
    <location>
        <begin position="809"/>
        <end position="811"/>
    </location>
</feature>
<feature type="helix" evidence="21">
    <location>
        <begin position="812"/>
        <end position="815"/>
    </location>
</feature>
<feature type="helix" evidence="19">
    <location>
        <begin position="826"/>
        <end position="846"/>
    </location>
</feature>
<feature type="turn" evidence="19">
    <location>
        <begin position="849"/>
        <end position="851"/>
    </location>
</feature>
<feature type="helix" evidence="19">
    <location>
        <begin position="852"/>
        <end position="864"/>
    </location>
</feature>
<feature type="strand" evidence="19">
    <location>
        <begin position="867"/>
        <end position="870"/>
    </location>
</feature>
<feature type="helix" evidence="19">
    <location>
        <begin position="872"/>
        <end position="889"/>
    </location>
</feature>
<feature type="helix" evidence="19">
    <location>
        <begin position="890"/>
        <end position="896"/>
    </location>
</feature>
<feature type="helix" evidence="19">
    <location>
        <begin position="897"/>
        <end position="907"/>
    </location>
</feature>
<feature type="helix" evidence="19">
    <location>
        <begin position="913"/>
        <end position="935"/>
    </location>
</feature>
<feature type="helix" evidence="19">
    <location>
        <begin position="938"/>
        <end position="945"/>
    </location>
</feature>
<feature type="helix" evidence="19">
    <location>
        <begin position="948"/>
        <end position="951"/>
    </location>
</feature>
<feature type="helix" evidence="19">
    <location>
        <begin position="955"/>
        <end position="971"/>
    </location>
</feature>
<feature type="strand" evidence="20">
    <location>
        <begin position="973"/>
        <end position="975"/>
    </location>
</feature>
<feature type="helix" evidence="19">
    <location>
        <begin position="979"/>
        <end position="988"/>
    </location>
</feature>
<feature type="helix" evidence="19">
    <location>
        <begin position="997"/>
        <end position="1011"/>
    </location>
</feature>
<feature type="helix" evidence="19">
    <location>
        <begin position="1016"/>
        <end position="1018"/>
    </location>
</feature>
<feature type="helix" evidence="19">
    <location>
        <begin position="1020"/>
        <end position="1025"/>
    </location>
</feature>
<feature type="helix" evidence="19">
    <location>
        <begin position="1027"/>
        <end position="1029"/>
    </location>
</feature>
<feature type="strand" evidence="21">
    <location>
        <begin position="1034"/>
        <end position="1036"/>
    </location>
</feature>
<feature type="helix" evidence="19">
    <location>
        <begin position="1038"/>
        <end position="1054"/>
    </location>
</feature>
<feature type="helix" evidence="19">
    <location>
        <begin position="1056"/>
        <end position="1062"/>
    </location>
</feature>
<feature type="helix" evidence="19">
    <location>
        <begin position="1068"/>
        <end position="1077"/>
    </location>
</feature>
<gene>
    <name type="primary">IPO4</name>
    <name type="synonym">IMP4B</name>
    <name type="synonym">RANBP4</name>
</gene>
<accession>Q8TEX9</accession>
<accession>B2RN95</accession>
<accession>Q2NL96</accession>
<accession>Q86TZ9</accession>
<accession>Q8NCG8</accession>
<accession>Q96SJ3</accession>
<accession>Q9BTI4</accession>
<accession>Q9H5L0</accession>
<dbReference type="EMBL" id="AF411122">
    <property type="protein sequence ID" value="AAL78660.1"/>
    <property type="molecule type" value="mRNA"/>
</dbReference>
<dbReference type="EMBL" id="BX248267">
    <property type="protein sequence ID" value="CAD62595.1"/>
    <property type="status" value="ALT_INIT"/>
    <property type="molecule type" value="mRNA"/>
</dbReference>
<dbReference type="EMBL" id="AL136295">
    <property type="status" value="NOT_ANNOTATED_CDS"/>
    <property type="molecule type" value="Genomic_DNA"/>
</dbReference>
<dbReference type="EMBL" id="CH471078">
    <property type="protein sequence ID" value="EAW66078.1"/>
    <property type="molecule type" value="Genomic_DNA"/>
</dbReference>
<dbReference type="EMBL" id="BC003690">
    <property type="protein sequence ID" value="AAH03690.2"/>
    <property type="molecule type" value="mRNA"/>
</dbReference>
<dbReference type="EMBL" id="BC110804">
    <property type="protein sequence ID" value="AAI10805.1"/>
    <property type="molecule type" value="mRNA"/>
</dbReference>
<dbReference type="EMBL" id="BC136759">
    <property type="protein sequence ID" value="AAI36760.1"/>
    <property type="molecule type" value="mRNA"/>
</dbReference>
<dbReference type="EMBL" id="AK026991">
    <property type="protein sequence ID" value="BAB15616.1"/>
    <property type="status" value="ALT_FRAME"/>
    <property type="molecule type" value="mRNA"/>
</dbReference>
<dbReference type="EMBL" id="AK027871">
    <property type="protein sequence ID" value="BAB55421.1"/>
    <property type="status" value="ALT_INIT"/>
    <property type="molecule type" value="mRNA"/>
</dbReference>
<dbReference type="EMBL" id="AK074743">
    <property type="protein sequence ID" value="BAC11174.1"/>
    <property type="status" value="ALT_INIT"/>
    <property type="molecule type" value="mRNA"/>
</dbReference>
<dbReference type="CCDS" id="CCDS9616.1">
    <molecule id="Q8TEX9-1"/>
</dbReference>
<dbReference type="RefSeq" id="NP_078934.3">
    <molecule id="Q8TEX9-1"/>
    <property type="nucleotide sequence ID" value="NM_024658.3"/>
</dbReference>
<dbReference type="PDB" id="5XAH">
    <property type="method" value="X-ray"/>
    <property type="resolution" value="3.00 A"/>
    <property type="chains" value="A/B/C/D=668-1081"/>
</dbReference>
<dbReference type="PDB" id="5XBK">
    <property type="method" value="X-ray"/>
    <property type="resolution" value="3.22 A"/>
    <property type="chains" value="A/B/C/D=668-1081"/>
</dbReference>
<dbReference type="PDB" id="7UNK">
    <property type="method" value="EM"/>
    <property type="resolution" value="3.45 A"/>
    <property type="chains" value="A=1-1081"/>
</dbReference>
<dbReference type="PDB" id="8DYO">
    <property type="method" value="EM"/>
    <property type="resolution" value="7.10 A"/>
    <property type="chains" value="A=1-1081"/>
</dbReference>
<dbReference type="PDBsum" id="5XAH"/>
<dbReference type="PDBsum" id="5XBK"/>
<dbReference type="PDBsum" id="7UNK"/>
<dbReference type="PDBsum" id="8DYO"/>
<dbReference type="EMDB" id="EMD-26625"/>
<dbReference type="EMDB" id="EMD-27780"/>
<dbReference type="SMR" id="Q8TEX9"/>
<dbReference type="BioGRID" id="122828">
    <property type="interactions" value="243"/>
</dbReference>
<dbReference type="CORUM" id="Q8TEX9"/>
<dbReference type="DIP" id="DIP-32944N"/>
<dbReference type="FunCoup" id="Q8TEX9">
    <property type="interactions" value="2385"/>
</dbReference>
<dbReference type="IntAct" id="Q8TEX9">
    <property type="interactions" value="93"/>
</dbReference>
<dbReference type="MINT" id="Q8TEX9"/>
<dbReference type="STRING" id="9606.ENSP00000346453"/>
<dbReference type="TCDB" id="1.I.1.1.3">
    <property type="family name" value="the nuclear pore complex (npc) family"/>
</dbReference>
<dbReference type="CarbonylDB" id="Q8TEX9"/>
<dbReference type="GlyGen" id="Q8TEX9">
    <property type="glycosylation" value="1 site, 1 O-linked glycan (1 site)"/>
</dbReference>
<dbReference type="iPTMnet" id="Q8TEX9"/>
<dbReference type="MetOSite" id="Q8TEX9"/>
<dbReference type="PhosphoSitePlus" id="Q8TEX9"/>
<dbReference type="SwissPalm" id="Q8TEX9"/>
<dbReference type="BioMuta" id="IPO4"/>
<dbReference type="DMDM" id="126302558"/>
<dbReference type="jPOST" id="Q8TEX9"/>
<dbReference type="MassIVE" id="Q8TEX9"/>
<dbReference type="PaxDb" id="9606-ENSP00000346453"/>
<dbReference type="PeptideAtlas" id="Q8TEX9"/>
<dbReference type="ProteomicsDB" id="74523">
    <molecule id="Q8TEX9-1"/>
</dbReference>
<dbReference type="ProteomicsDB" id="74524">
    <molecule id="Q8TEX9-2"/>
</dbReference>
<dbReference type="Pumba" id="Q8TEX9"/>
<dbReference type="Antibodypedia" id="47245">
    <property type="antibodies" value="114 antibodies from 22 providers"/>
</dbReference>
<dbReference type="DNASU" id="79711"/>
<dbReference type="Ensembl" id="ENST00000354464.11">
    <molecule id="Q8TEX9-1"/>
    <property type="protein sequence ID" value="ENSP00000346453.6"/>
    <property type="gene ID" value="ENSG00000196497.17"/>
</dbReference>
<dbReference type="Ensembl" id="ENST00000644546.2">
    <molecule id="Q8TEX9-1"/>
    <property type="protein sequence ID" value="ENSP00000494795.1"/>
    <property type="gene ID" value="ENSG00000285248.2"/>
</dbReference>
<dbReference type="GeneID" id="79711"/>
<dbReference type="KEGG" id="hsa:79711"/>
<dbReference type="MANE-Select" id="ENST00000354464.11">
    <property type="protein sequence ID" value="ENSP00000346453.6"/>
    <property type="RefSeq nucleotide sequence ID" value="NM_024658.4"/>
    <property type="RefSeq protein sequence ID" value="NP_078934.3"/>
</dbReference>
<dbReference type="UCSC" id="uc001wmv.2">
    <molecule id="Q8TEX9-1"/>
    <property type="organism name" value="human"/>
</dbReference>
<dbReference type="AGR" id="HGNC:19426"/>
<dbReference type="CTD" id="79711"/>
<dbReference type="DisGeNET" id="79711"/>
<dbReference type="GeneCards" id="IPO4"/>
<dbReference type="HGNC" id="HGNC:19426">
    <property type="gene designation" value="IPO4"/>
</dbReference>
<dbReference type="HPA" id="ENSG00000196497">
    <property type="expression patterns" value="Tissue enhanced (testis)"/>
</dbReference>
<dbReference type="neXtProt" id="NX_Q8TEX9"/>
<dbReference type="OpenTargets" id="ENSG00000196497"/>
<dbReference type="PharmGKB" id="PA134968932"/>
<dbReference type="VEuPathDB" id="HostDB:ENSG00000196497"/>
<dbReference type="eggNOG" id="KOG2171">
    <property type="taxonomic scope" value="Eukaryota"/>
</dbReference>
<dbReference type="GeneTree" id="ENSGT00550000075074"/>
<dbReference type="HOGENOM" id="CLU_003794_1_2_1"/>
<dbReference type="InParanoid" id="Q8TEX9"/>
<dbReference type="OMA" id="ANACGCV"/>
<dbReference type="OrthoDB" id="7862313at2759"/>
<dbReference type="PAN-GO" id="Q8TEX9">
    <property type="GO annotations" value="5 GO annotations based on evolutionary models"/>
</dbReference>
<dbReference type="PhylomeDB" id="Q8TEX9"/>
<dbReference type="TreeFam" id="TF323157"/>
<dbReference type="PathwayCommons" id="Q8TEX9"/>
<dbReference type="SignaLink" id="Q8TEX9"/>
<dbReference type="BioGRID-ORCS" id="79711">
    <property type="hits" value="33 hits in 1158 CRISPR screens"/>
</dbReference>
<dbReference type="CD-CODE" id="91857CE7">
    <property type="entry name" value="Nucleolus"/>
</dbReference>
<dbReference type="ChiTaRS" id="IPO4">
    <property type="organism name" value="human"/>
</dbReference>
<dbReference type="GeneWiki" id="IPO4"/>
<dbReference type="GenomeRNAi" id="79711"/>
<dbReference type="Pharos" id="Q8TEX9">
    <property type="development level" value="Tbio"/>
</dbReference>
<dbReference type="PRO" id="PR:Q8TEX9"/>
<dbReference type="Proteomes" id="UP000005640">
    <property type="component" value="Chromosome 14"/>
</dbReference>
<dbReference type="RNAct" id="Q8TEX9">
    <property type="molecule type" value="protein"/>
</dbReference>
<dbReference type="Bgee" id="ENSG00000196497">
    <property type="expression patterns" value="Expressed in left testis and 96 other cell types or tissues"/>
</dbReference>
<dbReference type="ExpressionAtlas" id="Q8TEX9">
    <property type="expression patterns" value="baseline and differential"/>
</dbReference>
<dbReference type="GO" id="GO:0000785">
    <property type="term" value="C:chromatin"/>
    <property type="evidence" value="ECO:0000314"/>
    <property type="project" value="UniProtKB"/>
</dbReference>
<dbReference type="GO" id="GO:0005737">
    <property type="term" value="C:cytoplasm"/>
    <property type="evidence" value="ECO:0000318"/>
    <property type="project" value="GO_Central"/>
</dbReference>
<dbReference type="GO" id="GO:0016020">
    <property type="term" value="C:membrane"/>
    <property type="evidence" value="ECO:0007005"/>
    <property type="project" value="UniProtKB"/>
</dbReference>
<dbReference type="GO" id="GO:0005634">
    <property type="term" value="C:nucleus"/>
    <property type="evidence" value="ECO:0000318"/>
    <property type="project" value="GO_Central"/>
</dbReference>
<dbReference type="GO" id="GO:0032991">
    <property type="term" value="C:protein-containing complex"/>
    <property type="evidence" value="ECO:0000314"/>
    <property type="project" value="UniProtKB"/>
</dbReference>
<dbReference type="GO" id="GO:0061608">
    <property type="term" value="F:nuclear import signal receptor activity"/>
    <property type="evidence" value="ECO:0000314"/>
    <property type="project" value="UniProtKB"/>
</dbReference>
<dbReference type="GO" id="GO:0008139">
    <property type="term" value="F:nuclear localization sequence binding"/>
    <property type="evidence" value="ECO:0000314"/>
    <property type="project" value="UniProtKB"/>
</dbReference>
<dbReference type="GO" id="GO:0031267">
    <property type="term" value="F:small GTPase binding"/>
    <property type="evidence" value="ECO:0007669"/>
    <property type="project" value="InterPro"/>
</dbReference>
<dbReference type="GO" id="GO:0006606">
    <property type="term" value="P:protein import into nucleus"/>
    <property type="evidence" value="ECO:0000314"/>
    <property type="project" value="UniProtKB"/>
</dbReference>
<dbReference type="GO" id="GO:0034504">
    <property type="term" value="P:protein localization to nucleus"/>
    <property type="evidence" value="ECO:0000314"/>
    <property type="project" value="GO_Central"/>
</dbReference>
<dbReference type="Gene3D" id="1.25.10.10">
    <property type="entry name" value="Leucine-rich Repeat Variant"/>
    <property type="match status" value="1"/>
</dbReference>
<dbReference type="InterPro" id="IPR011989">
    <property type="entry name" value="ARM-like"/>
</dbReference>
<dbReference type="InterPro" id="IPR016024">
    <property type="entry name" value="ARM-type_fold"/>
</dbReference>
<dbReference type="InterPro" id="IPR021133">
    <property type="entry name" value="HEAT_type_2"/>
</dbReference>
<dbReference type="InterPro" id="IPR001494">
    <property type="entry name" value="Importin-beta_N"/>
</dbReference>
<dbReference type="InterPro" id="IPR040122">
    <property type="entry name" value="Importin_beta"/>
</dbReference>
<dbReference type="InterPro" id="IPR034085">
    <property type="entry name" value="TOG"/>
</dbReference>
<dbReference type="PANTHER" id="PTHR10527">
    <property type="entry name" value="IMPORTIN BETA"/>
    <property type="match status" value="1"/>
</dbReference>
<dbReference type="Pfam" id="PF13513">
    <property type="entry name" value="HEAT_EZ"/>
    <property type="match status" value="2"/>
</dbReference>
<dbReference type="Pfam" id="PF03810">
    <property type="entry name" value="IBN_N"/>
    <property type="match status" value="1"/>
</dbReference>
<dbReference type="SMART" id="SM00913">
    <property type="entry name" value="IBN_N"/>
    <property type="match status" value="1"/>
</dbReference>
<dbReference type="SMART" id="SM01349">
    <property type="entry name" value="TOG"/>
    <property type="match status" value="1"/>
</dbReference>
<dbReference type="SUPFAM" id="SSF48371">
    <property type="entry name" value="ARM repeat"/>
    <property type="match status" value="2"/>
</dbReference>
<dbReference type="PROSITE" id="PS50077">
    <property type="entry name" value="HEAT_REPEAT"/>
    <property type="match status" value="2"/>
</dbReference>
<dbReference type="PROSITE" id="PS50166">
    <property type="entry name" value="IMPORTIN_B_NT"/>
    <property type="match status" value="1"/>
</dbReference>
<organism>
    <name type="scientific">Homo sapiens</name>
    <name type="common">Human</name>
    <dbReference type="NCBI Taxonomy" id="9606"/>
    <lineage>
        <taxon>Eukaryota</taxon>
        <taxon>Metazoa</taxon>
        <taxon>Chordata</taxon>
        <taxon>Craniata</taxon>
        <taxon>Vertebrata</taxon>
        <taxon>Euteleostomi</taxon>
        <taxon>Mammalia</taxon>
        <taxon>Eutheria</taxon>
        <taxon>Euarchontoglires</taxon>
        <taxon>Primates</taxon>
        <taxon>Haplorrhini</taxon>
        <taxon>Catarrhini</taxon>
        <taxon>Hominidae</taxon>
        <taxon>Homo</taxon>
    </lineage>
</organism>
<evidence type="ECO:0000255" key="1">
    <source>
        <dbReference type="PROSITE-ProRule" id="PRU00115"/>
    </source>
</evidence>
<evidence type="ECO:0000269" key="2">
    <source>
    </source>
</evidence>
<evidence type="ECO:0000269" key="3">
    <source>
    </source>
</evidence>
<evidence type="ECO:0000269" key="4">
    <source>
    </source>
</evidence>
<evidence type="ECO:0000269" key="5">
    <source>
    </source>
</evidence>
<evidence type="ECO:0000269" key="6">
    <source>
    </source>
</evidence>
<evidence type="ECO:0000269" key="7">
    <source>
    </source>
</evidence>
<evidence type="ECO:0000269" key="8">
    <source>
    </source>
</evidence>
<evidence type="ECO:0000269" key="9">
    <source>
    </source>
</evidence>
<evidence type="ECO:0000269" key="10">
    <source ref="6"/>
</evidence>
<evidence type="ECO:0000303" key="11">
    <source>
    </source>
</evidence>
<evidence type="ECO:0000303" key="12">
    <source>
    </source>
</evidence>
<evidence type="ECO:0000305" key="13"/>
<evidence type="ECO:0007744" key="14">
    <source>
        <dbReference type="PDB" id="5XAH"/>
    </source>
</evidence>
<evidence type="ECO:0007744" key="15">
    <source>
        <dbReference type="PDB" id="5XBK"/>
    </source>
</evidence>
<evidence type="ECO:0007744" key="16">
    <source>
    </source>
</evidence>
<evidence type="ECO:0007744" key="17">
    <source>
    </source>
</evidence>
<evidence type="ECO:0007744" key="18">
    <source>
    </source>
</evidence>
<evidence type="ECO:0007829" key="19">
    <source>
        <dbReference type="PDB" id="5XAH"/>
    </source>
</evidence>
<evidence type="ECO:0007829" key="20">
    <source>
        <dbReference type="PDB" id="5XBK"/>
    </source>
</evidence>
<evidence type="ECO:0007829" key="21">
    <source>
        <dbReference type="PDB" id="7UNK"/>
    </source>
</evidence>
<comment type="function">
    <text evidence="2 3 5 6 7 9">Nuclear transport receptor that mediates nuclear import of proteins, such as histones, RPS3A, TNP2 and VDR (PubMed:11823430, PubMed:16207705, PubMed:17682055, PubMed:21454524). Serves as receptor for nuclear localization signals (NLS) in cargo substrates (PubMed:11823430, PubMed:16207705). Is thought to mediate docking of the importin/substrate complex to the nuclear pore complex (NPC) through binding to nucleoporin and the complex is subsequently translocated through the pore by an energy requiring, Ran-dependent mechanism (PubMed:11823430, PubMed:16207705). At the nucleoplasmic side of the NPC, Ran binds to the importin, the importin/substrate complex dissociates and importin is re-exported from the nucleus to the cytoplasm where GTP hydrolysis releases Ran (PubMed:11823430). The directionality of nuclear import is thought to be conferred by an asymmetric distribution of the GTP- and GDP-bound forms of Ran between the cytoplasm and nucleus (PubMed:11823430). Mediates the nuclear import of the histone H3-H4 dimer when in complex with ASF1 (ASF1A or ASF1B) (PubMed:21454524, PubMed:29408485). Mediates the ligand-independent nuclear import of vitamin D receptor (VDR) (PubMed:16207705). In vitro, mediates the nuclear import of human cytomegalovirus UL84 by recognizing a non-classical NLS (PubMed:12610148).</text>
</comment>
<comment type="subunit">
    <text evidence="7 8">Found in a cytosolic complex with ASF1 (ASF1A or ASF1B) and histones H3 and H4.</text>
</comment>
<comment type="interaction">
    <interactant intactId="EBI-395967">
        <id>Q8TEX9</id>
    </interactant>
    <interactant intactId="EBI-7962058">
        <id>P49716</id>
        <label>CEBPD</label>
    </interactant>
    <organismsDiffer>false</organismsDiffer>
    <experiments>5</experiments>
</comment>
<comment type="interaction">
    <interactant intactId="EBI-395967">
        <id>Q8TEX9</id>
    </interactant>
    <interactant intactId="EBI-740220">
        <id>O14964</id>
        <label>HGS</label>
    </interactant>
    <organismsDiffer>false</organismsDiffer>
    <experiments>5</experiments>
</comment>
<comment type="interaction">
    <interactant intactId="EBI-395967">
        <id>Q8TEX9</id>
    </interactant>
    <interactant intactId="EBI-466029">
        <id>P42858</id>
        <label>HTT</label>
    </interactant>
    <organismsDiffer>false</organismsDiffer>
    <experiments>7</experiments>
</comment>
<comment type="interaction">
    <interactant intactId="EBI-395967">
        <id>Q8TEX9</id>
    </interactant>
    <interactant intactId="EBI-2555179">
        <id>Q9NUJ3</id>
        <label>TCP11L1</label>
    </interactant>
    <organismsDiffer>false</organismsDiffer>
    <experiments>3</experiments>
</comment>
<comment type="subcellular location">
    <subcellularLocation>
        <location evidence="5 6">Cytoplasm</location>
    </subcellularLocation>
    <subcellularLocation>
        <location evidence="5 6">Nucleus</location>
    </subcellularLocation>
</comment>
<comment type="alternative products">
    <event type="alternative splicing"/>
    <isoform>
        <id>Q8TEX9-1</id>
        <name>1</name>
        <sequence type="displayed"/>
    </isoform>
    <isoform>
        <id>Q8TEX9-2</id>
        <name>2</name>
        <sequence type="described" ref="VSP_009339"/>
    </isoform>
</comment>
<comment type="similarity">
    <text evidence="13">Belongs to the importin beta family.</text>
</comment>
<comment type="sequence caution" evidence="13">
    <conflict type="frameshift">
        <sequence resource="EMBL-CDS" id="BAB15616"/>
    </conflict>
</comment>
<comment type="sequence caution" evidence="13">
    <conflict type="erroneous initiation">
        <sequence resource="EMBL-CDS" id="BAB55421"/>
    </conflict>
    <text>Extended N-terminus.</text>
</comment>
<comment type="sequence caution" evidence="13">
    <conflict type="erroneous initiation">
        <sequence resource="EMBL-CDS" id="BAC11174"/>
    </conflict>
    <text>Truncated N-terminus.</text>
</comment>
<comment type="sequence caution" evidence="13">
    <conflict type="erroneous initiation">
        <sequence resource="EMBL-CDS" id="CAD62595"/>
    </conflict>
    <text>Truncated N-terminus.</text>
</comment>
<sequence length="1081" mass="118715">MESAGLEQLLRELLLPDTERIRRATEQLQIVLRAPAALPALCDLLASAADPQIRQFAAVLTRRRLNTRWRRLAAEQRESLKSLILTALQRETEHCVSLSLAQLSATIFRKEGLEAWPQLLQLLQHSTHSPHSPEREMGLLLLSVVVTSRPEAFQPHHRELLRLLNETLGEVGSPGLLFYSLRTLTTMAPYLSTEDVPLARMLVPKLIMAMQTLIPIDEAKACEALEALDELLESEVPVITPYLSEVLTFCLEVARNVALGNAIRIRILCCLTFLVKVKSKALLKNRLLPPLLHTLFPIVAAEPPPGQLDPEDQDSEEEELEIELMGETPKHFAVQVVDMLALHLPPEKLCPQLMPMLEEALRSESPYQRKAGLLVLAVLSDGAGDHIRQRLLPPLLQIVCKGLEDPSQVVRNAALFALGQFSENLQPHISSYSREVMPLLLAYLKSVPLGHTHHLAKACYALENFVENLGPKVQPYLPELMECMLQLLRNPSSPRAKELAVSALGAIATAAQASLLPYFPAIMEHLREFLLTGREDLQPVQIQSLETLGVLARAVGEPMRPLAEECCQLGLGLCDQVDDPDLRRCTYSLFAALSGLMGEGLAPHLEQITTLMLLSLRSTEGIVPQYDGSSSFLLFDDESDGEEEEELMDEDVEEEDDSEISGYSVENAFFDEKEDTCAAVGEISVNTSVAFLPYMESVFEEVFKLLECPHLNVRKAAHEALGQFCCALHKACQSCPSEPNTAALQAALARVVPSYMQAVNRERERQVVMAVLEALTGVLRSCGTLTLKPPGRLAELCGVLKAVLQRKTACQDTDEEEEEEDDDQAEYDAMLLEHAGEAIPALAAAAGGDSFAPFFAGFLPLLVCKTKQGCTVAEKSFAVGTLAETIQGLGAASAQFVSRLLPVLLSTAQEADPEVRSNAIFGMGVLAEHGGHPAQEHFPKLLGLLFPLLARERHDRVRDNICGALARLLMASPTRKPEPQVLAALLHALPLKEDLEEWVTIGRLFSFLYQSSPDQVIDVAPELLRICSLILADNKIPPDTKAALLLLLTFLAKQHTDSFQAALGSLPVDKAQELQAVLGLS</sequence>
<protein>
    <recommendedName>
        <fullName evidence="11">Importin-4</fullName>
        <shortName evidence="11">Imp4</shortName>
    </recommendedName>
    <alternativeName>
        <fullName evidence="11">Importin-4b</fullName>
        <shortName evidence="11">Imp4b</shortName>
    </alternativeName>
    <alternativeName>
        <fullName>Ran-binding protein 4</fullName>
        <shortName>RanBP4</shortName>
    </alternativeName>
</protein>
<proteinExistence type="evidence at protein level"/>
<keyword id="KW-0002">3D-structure</keyword>
<keyword id="KW-0007">Acetylation</keyword>
<keyword id="KW-0025">Alternative splicing</keyword>
<keyword id="KW-0963">Cytoplasm</keyword>
<keyword id="KW-0903">Direct protein sequencing</keyword>
<keyword id="KW-0539">Nucleus</keyword>
<keyword id="KW-0653">Protein transport</keyword>
<keyword id="KW-1267">Proteomics identification</keyword>
<keyword id="KW-1185">Reference proteome</keyword>
<keyword id="KW-0677">Repeat</keyword>
<keyword id="KW-0813">Transport</keyword>